<keyword id="KW-0020">Allergen</keyword>
<keyword id="KW-0551">Lipid droplet</keyword>
<keyword id="KW-0472">Membrane</keyword>
<keyword id="KW-0812">Transmembrane</keyword>
<keyword id="KW-1133">Transmembrane helix</keyword>
<protein>
    <recommendedName>
        <fullName evidence="6">Oleosin Cor a 13</fullName>
    </recommendedName>
    <allergenName evidence="6">Cor a 13</allergenName>
</protein>
<evidence type="ECO:0000250" key="1">
    <source>
        <dbReference type="UniProtKB" id="O04925"/>
    </source>
</evidence>
<evidence type="ECO:0000255" key="2"/>
<evidence type="ECO:0000255" key="3">
    <source>
        <dbReference type="RuleBase" id="RU000540"/>
    </source>
</evidence>
<evidence type="ECO:0000269" key="4">
    <source>
    </source>
</evidence>
<evidence type="ECO:0000269" key="5">
    <source>
    </source>
</evidence>
<evidence type="ECO:0000303" key="6">
    <source>
    </source>
</evidence>
<evidence type="ECO:0000305" key="7"/>
<evidence type="ECO:0000312" key="8">
    <source>
        <dbReference type="EMBL" id="AAO65960.1"/>
    </source>
</evidence>
<organism evidence="8">
    <name type="scientific">Corylus avellana</name>
    <name type="common">European hazel</name>
    <name type="synonym">Corylus maxima</name>
    <dbReference type="NCBI Taxonomy" id="13451"/>
    <lineage>
        <taxon>Eukaryota</taxon>
        <taxon>Viridiplantae</taxon>
        <taxon>Streptophyta</taxon>
        <taxon>Embryophyta</taxon>
        <taxon>Tracheophyta</taxon>
        <taxon>Spermatophyta</taxon>
        <taxon>Magnoliopsida</taxon>
        <taxon>eudicotyledons</taxon>
        <taxon>Gunneridae</taxon>
        <taxon>Pentapetalae</taxon>
        <taxon>rosids</taxon>
        <taxon>fabids</taxon>
        <taxon>Fagales</taxon>
        <taxon>Betulaceae</taxon>
        <taxon>Corylus</taxon>
    </lineage>
</organism>
<dbReference type="EMBL" id="AY224599">
    <property type="protein sequence ID" value="AAO65960.1"/>
    <property type="molecule type" value="mRNA"/>
</dbReference>
<dbReference type="Allergome" id="5765">
    <property type="allergen name" value="Cor a 13"/>
</dbReference>
<dbReference type="Allergome" id="5766">
    <property type="allergen name" value="Cor a 13.0101"/>
</dbReference>
<dbReference type="GO" id="GO:0005576">
    <property type="term" value="C:extracellular region"/>
    <property type="evidence" value="ECO:0007669"/>
    <property type="project" value="TreeGrafter"/>
</dbReference>
<dbReference type="GO" id="GO:0016020">
    <property type="term" value="C:membrane"/>
    <property type="evidence" value="ECO:0007669"/>
    <property type="project" value="UniProtKB-SubCell"/>
</dbReference>
<dbReference type="GO" id="GO:0012511">
    <property type="term" value="C:monolayer-surrounded lipid storage body"/>
    <property type="evidence" value="ECO:0007669"/>
    <property type="project" value="InterPro"/>
</dbReference>
<dbReference type="GO" id="GO:0019915">
    <property type="term" value="P:lipid storage"/>
    <property type="evidence" value="ECO:0007669"/>
    <property type="project" value="TreeGrafter"/>
</dbReference>
<dbReference type="GO" id="GO:0009791">
    <property type="term" value="P:post-embryonic development"/>
    <property type="evidence" value="ECO:0007669"/>
    <property type="project" value="UniProtKB-ARBA"/>
</dbReference>
<dbReference type="GO" id="GO:0048608">
    <property type="term" value="P:reproductive structure development"/>
    <property type="evidence" value="ECO:0007669"/>
    <property type="project" value="UniProtKB-ARBA"/>
</dbReference>
<dbReference type="GO" id="GO:0019953">
    <property type="term" value="P:sexual reproduction"/>
    <property type="evidence" value="ECO:0007669"/>
    <property type="project" value="TreeGrafter"/>
</dbReference>
<dbReference type="InterPro" id="IPR000136">
    <property type="entry name" value="Oleosin"/>
</dbReference>
<dbReference type="PANTHER" id="PTHR33203">
    <property type="entry name" value="OLEOSIN"/>
    <property type="match status" value="1"/>
</dbReference>
<dbReference type="PANTHER" id="PTHR33203:SF25">
    <property type="entry name" value="OLEOSIN 18.5 KDA"/>
    <property type="match status" value="1"/>
</dbReference>
<dbReference type="Pfam" id="PF01277">
    <property type="entry name" value="Oleosin"/>
    <property type="match status" value="1"/>
</dbReference>
<dbReference type="PROSITE" id="PS00811">
    <property type="entry name" value="OLEOSINS"/>
    <property type="match status" value="1"/>
</dbReference>
<name>OLE13_CORAV</name>
<comment type="function">
    <text evidence="7">May have a structural role to stabilize the lipid body during desiccation of the seed by preventing coalescence of the oil. Probably interacts with both lipid and phospholipid moieties of lipid bodies. May also provide recognition signals for specific lipase anchorage in lipolysis during seedling growth.</text>
</comment>
<comment type="subcellular location">
    <subcellularLocation>
        <location evidence="1">Lipid droplet</location>
    </subcellularLocation>
    <subcellularLocation>
        <location evidence="3">Membrane</location>
        <topology evidence="3">Multi-pass membrane protein</topology>
    </subcellularLocation>
    <text evidence="7">Surface of oil bodies. Oleosins exist at a monolayer lipid/water interface.</text>
</comment>
<comment type="tissue specificity">
    <text evidence="4">Expressed in seeds.</text>
</comment>
<comment type="mass spectrometry" mass="14000.0" method="MALDI" evidence="5"/>
<comment type="allergen">
    <text evidence="5">Causes an allergic reaction in human (PubMed:34146442). Binds to IgE of patients allergic to hazelnuts (PubMed:34146442).</text>
</comment>
<comment type="similarity">
    <text evidence="7">Belongs to the oleosin family.</text>
</comment>
<reference evidence="8" key="1">
    <citation type="journal article" date="2006" name="Mol. Nutr. Food Res.">
        <title>Cloning of oleosin, a putative new hazelnut allergen, using a hazelnut cDNA library.</title>
        <authorList>
            <person name="Akkerdaas J.H."/>
            <person name="Schocker F."/>
            <person name="Vieths S."/>
            <person name="Versteeg S."/>
            <person name="Zuidmeer L."/>
            <person name="Hefle S.L."/>
            <person name="Aalberse R.C."/>
            <person name="Richter K."/>
            <person name="Ferreira F."/>
            <person name="van Ree R."/>
        </authorList>
    </citation>
    <scope>NUCLEOTIDE SEQUENCE [MRNA]</scope>
    <scope>TISSUE SPECIFICITY</scope>
</reference>
<reference evidence="7" key="2">
    <citation type="journal article" date="2021" name="Pediatr. Allergy Immunol.">
        <title>Oleosin Cor a 15 is a novel allergen for Italian hazelnut allergic children.</title>
        <authorList>
            <person name="Nebbia S."/>
            <person name="Lamberti C."/>
            <person name="Cirrincione S."/>
            <person name="Acquadro A."/>
            <person name="Abba S."/>
            <person name="Ciuffo M."/>
            <person name="Torello Marinoni D."/>
            <person name="Manfredi M."/>
            <person name="Marengo E."/>
            <person name="Calzedda R."/>
            <person name="Monti G."/>
            <person name="Cavallarin L."/>
            <person name="Giuffrida M.G."/>
        </authorList>
    </citation>
    <scope>MASS SPECTROMETRY</scope>
    <scope>ALLERGEN</scope>
</reference>
<accession>Q84T91</accession>
<sequence length="140" mass="14732">MAEHPRQLQDPAHQPRSHQVVKAATAATAGGSLLVPSGLILAGTVIALTLATPLFVIFSPVLVPAVITVSLIIMGFLASGGFGVAAVTVLSWIYRYVTGRHPPGADQLDHARMKLASKAREMKDRAEQFGQQHVTGSQGS</sequence>
<feature type="chain" id="PRO_0000456212" description="Oleosin Cor a 13">
    <location>
        <begin position="1"/>
        <end position="140"/>
    </location>
</feature>
<feature type="transmembrane region" description="Helical" evidence="2">
    <location>
        <begin position="31"/>
        <end position="51"/>
    </location>
</feature>
<feature type="transmembrane region" description="Helical" evidence="2">
    <location>
        <begin position="75"/>
        <end position="95"/>
    </location>
</feature>
<proteinExistence type="evidence at protein level"/>